<feature type="chain" id="PRO_1000204298" description="GTP cyclohydrolase 1">
    <location>
        <begin position="1"/>
        <end position="208"/>
    </location>
</feature>
<feature type="binding site" evidence="1">
    <location>
        <position position="89"/>
    </location>
    <ligand>
        <name>Zn(2+)</name>
        <dbReference type="ChEBI" id="CHEBI:29105"/>
    </ligand>
</feature>
<feature type="binding site" evidence="1">
    <location>
        <position position="92"/>
    </location>
    <ligand>
        <name>Zn(2+)</name>
        <dbReference type="ChEBI" id="CHEBI:29105"/>
    </ligand>
</feature>
<feature type="binding site" evidence="1">
    <location>
        <position position="163"/>
    </location>
    <ligand>
        <name>Zn(2+)</name>
        <dbReference type="ChEBI" id="CHEBI:29105"/>
    </ligand>
</feature>
<comment type="catalytic activity">
    <reaction evidence="1">
        <text>GTP + H2O = 7,8-dihydroneopterin 3'-triphosphate + formate + H(+)</text>
        <dbReference type="Rhea" id="RHEA:17473"/>
        <dbReference type="ChEBI" id="CHEBI:15377"/>
        <dbReference type="ChEBI" id="CHEBI:15378"/>
        <dbReference type="ChEBI" id="CHEBI:15740"/>
        <dbReference type="ChEBI" id="CHEBI:37565"/>
        <dbReference type="ChEBI" id="CHEBI:58462"/>
        <dbReference type="EC" id="3.5.4.16"/>
    </reaction>
</comment>
<comment type="pathway">
    <text evidence="1">Cofactor biosynthesis; 7,8-dihydroneopterin triphosphate biosynthesis; 7,8-dihydroneopterin triphosphate from GTP: step 1/1.</text>
</comment>
<comment type="subunit">
    <text evidence="1">Homomer.</text>
</comment>
<comment type="similarity">
    <text evidence="1">Belongs to the GTP cyclohydrolase I family.</text>
</comment>
<organism>
    <name type="scientific">Saccharolobus islandicus (strain Y.N.15.51 / Yellowstone #2)</name>
    <name type="common">Sulfolobus islandicus</name>
    <dbReference type="NCBI Taxonomy" id="419942"/>
    <lineage>
        <taxon>Archaea</taxon>
        <taxon>Thermoproteota</taxon>
        <taxon>Thermoprotei</taxon>
        <taxon>Sulfolobales</taxon>
        <taxon>Sulfolobaceae</taxon>
        <taxon>Saccharolobus</taxon>
    </lineage>
</organism>
<evidence type="ECO:0000255" key="1">
    <source>
        <dbReference type="HAMAP-Rule" id="MF_00223"/>
    </source>
</evidence>
<sequence>MQKTELDDQKLVEEIARRIREILELLGENPEREGLKETPERVAKALLEMTSGLRTPPPQIKVFSLGEDGEAYEKNQIVLIKDVNFSSLCEHHMLPIIGKIHVAYIVSNSGKVAGFSKIIRIVNYYSSRLQIQERLVEQIADAIMNSEIKPKGVMVIGNAIHMCSYVRGVKDKEAKLVSVAYRGLFKTNRALQNHVFRLLDNANKVNLL</sequence>
<dbReference type="EC" id="3.5.4.16" evidence="1"/>
<dbReference type="EMBL" id="CP001404">
    <property type="protein sequence ID" value="ACP48177.1"/>
    <property type="molecule type" value="Genomic_DNA"/>
</dbReference>
<dbReference type="RefSeq" id="WP_012717327.1">
    <property type="nucleotide sequence ID" value="NC_012623.1"/>
</dbReference>
<dbReference type="SMR" id="C3NGB7"/>
<dbReference type="GeneID" id="7810798"/>
<dbReference type="KEGG" id="sin:YN1551_1070"/>
<dbReference type="HOGENOM" id="CLU_049768_3_2_2"/>
<dbReference type="UniPathway" id="UPA00848">
    <property type="reaction ID" value="UER00151"/>
</dbReference>
<dbReference type="Proteomes" id="UP000006818">
    <property type="component" value="Chromosome"/>
</dbReference>
<dbReference type="GO" id="GO:0005737">
    <property type="term" value="C:cytoplasm"/>
    <property type="evidence" value="ECO:0007669"/>
    <property type="project" value="TreeGrafter"/>
</dbReference>
<dbReference type="GO" id="GO:0005525">
    <property type="term" value="F:GTP binding"/>
    <property type="evidence" value="ECO:0007669"/>
    <property type="project" value="UniProtKB-KW"/>
</dbReference>
<dbReference type="GO" id="GO:0003934">
    <property type="term" value="F:GTP cyclohydrolase I activity"/>
    <property type="evidence" value="ECO:0007669"/>
    <property type="project" value="UniProtKB-UniRule"/>
</dbReference>
<dbReference type="GO" id="GO:0008270">
    <property type="term" value="F:zinc ion binding"/>
    <property type="evidence" value="ECO:0007669"/>
    <property type="project" value="UniProtKB-UniRule"/>
</dbReference>
<dbReference type="GO" id="GO:0006730">
    <property type="term" value="P:one-carbon metabolic process"/>
    <property type="evidence" value="ECO:0007669"/>
    <property type="project" value="UniProtKB-UniRule"/>
</dbReference>
<dbReference type="GO" id="GO:0006729">
    <property type="term" value="P:tetrahydrobiopterin biosynthetic process"/>
    <property type="evidence" value="ECO:0007669"/>
    <property type="project" value="TreeGrafter"/>
</dbReference>
<dbReference type="GO" id="GO:0046654">
    <property type="term" value="P:tetrahydrofolate biosynthetic process"/>
    <property type="evidence" value="ECO:0007669"/>
    <property type="project" value="UniProtKB-UniRule"/>
</dbReference>
<dbReference type="FunFam" id="1.10.286.10:FF:000007">
    <property type="entry name" value="GTP cyclohydrolase 1"/>
    <property type="match status" value="1"/>
</dbReference>
<dbReference type="FunFam" id="3.30.1130.10:FF:000001">
    <property type="entry name" value="GTP cyclohydrolase 1"/>
    <property type="match status" value="1"/>
</dbReference>
<dbReference type="Gene3D" id="1.10.286.10">
    <property type="match status" value="1"/>
</dbReference>
<dbReference type="Gene3D" id="3.30.1130.10">
    <property type="match status" value="1"/>
</dbReference>
<dbReference type="HAMAP" id="MF_00223">
    <property type="entry name" value="FolE"/>
    <property type="match status" value="1"/>
</dbReference>
<dbReference type="InterPro" id="IPR043133">
    <property type="entry name" value="GTP-CH-I_C/QueF"/>
</dbReference>
<dbReference type="InterPro" id="IPR043134">
    <property type="entry name" value="GTP-CH-I_N"/>
</dbReference>
<dbReference type="InterPro" id="IPR001474">
    <property type="entry name" value="GTP_CycHdrlase_I"/>
</dbReference>
<dbReference type="InterPro" id="IPR018234">
    <property type="entry name" value="GTP_CycHdrlase_I_CS"/>
</dbReference>
<dbReference type="InterPro" id="IPR020602">
    <property type="entry name" value="GTP_CycHdrlase_I_dom"/>
</dbReference>
<dbReference type="NCBIfam" id="NF006825">
    <property type="entry name" value="PRK09347.1-2"/>
    <property type="match status" value="1"/>
</dbReference>
<dbReference type="NCBIfam" id="NF006826">
    <property type="entry name" value="PRK09347.1-3"/>
    <property type="match status" value="1"/>
</dbReference>
<dbReference type="PANTHER" id="PTHR11109:SF7">
    <property type="entry name" value="GTP CYCLOHYDROLASE 1"/>
    <property type="match status" value="1"/>
</dbReference>
<dbReference type="PANTHER" id="PTHR11109">
    <property type="entry name" value="GTP CYCLOHYDROLASE I"/>
    <property type="match status" value="1"/>
</dbReference>
<dbReference type="Pfam" id="PF01227">
    <property type="entry name" value="GTP_cyclohydroI"/>
    <property type="match status" value="1"/>
</dbReference>
<dbReference type="SUPFAM" id="SSF55620">
    <property type="entry name" value="Tetrahydrobiopterin biosynthesis enzymes-like"/>
    <property type="match status" value="1"/>
</dbReference>
<dbReference type="PROSITE" id="PS00859">
    <property type="entry name" value="GTP_CYCLOHYDROL_1_1"/>
    <property type="match status" value="1"/>
</dbReference>
<dbReference type="PROSITE" id="PS00860">
    <property type="entry name" value="GTP_CYCLOHYDROL_1_2"/>
    <property type="match status" value="1"/>
</dbReference>
<name>GCH1_SACI1</name>
<reference key="1">
    <citation type="journal article" date="2009" name="Proc. Natl. Acad. Sci. U.S.A.">
        <title>Biogeography of the Sulfolobus islandicus pan-genome.</title>
        <authorList>
            <person name="Reno M.L."/>
            <person name="Held N.L."/>
            <person name="Fields C.J."/>
            <person name="Burke P.V."/>
            <person name="Whitaker R.J."/>
        </authorList>
    </citation>
    <scope>NUCLEOTIDE SEQUENCE [LARGE SCALE GENOMIC DNA]</scope>
    <source>
        <strain>Y.N.15.51 / Yellowstone #2</strain>
    </source>
</reference>
<gene>
    <name evidence="1" type="primary">folE</name>
    <name type="ordered locus">YN1551_1070</name>
</gene>
<accession>C3NGB7</accession>
<protein>
    <recommendedName>
        <fullName evidence="1">GTP cyclohydrolase 1</fullName>
        <ecNumber evidence="1">3.5.4.16</ecNumber>
    </recommendedName>
    <alternativeName>
        <fullName evidence="1">GTP cyclohydrolase I</fullName>
        <shortName evidence="1">GTP-CH-I</shortName>
    </alternativeName>
</protein>
<keyword id="KW-0342">GTP-binding</keyword>
<keyword id="KW-0378">Hydrolase</keyword>
<keyword id="KW-0479">Metal-binding</keyword>
<keyword id="KW-0547">Nucleotide-binding</keyword>
<keyword id="KW-0554">One-carbon metabolism</keyword>
<keyword id="KW-0862">Zinc</keyword>
<proteinExistence type="inferred from homology"/>